<organism>
    <name type="scientific">Staphylococcus aureus (strain bovine RF122 / ET3-1)</name>
    <dbReference type="NCBI Taxonomy" id="273036"/>
    <lineage>
        <taxon>Bacteria</taxon>
        <taxon>Bacillati</taxon>
        <taxon>Bacillota</taxon>
        <taxon>Bacilli</taxon>
        <taxon>Bacillales</taxon>
        <taxon>Staphylococcaceae</taxon>
        <taxon>Staphylococcus</taxon>
    </lineage>
</organism>
<gene>
    <name type="ordered locus">SAB1263c</name>
</gene>
<sequence>MNKNTWVIGFTLFAMFFGAGNLIFPPNLGLDSGQFFWPAILAFVLTGIDLPLLGVIVGALDKEGYIGALNKISPKFSILFLIIIYLTIGPLFAIPRTASTSFEMTITPIIHSNSSIALFIFTIIYFIVVLYICLNPSKLIDRIGSLLTPLLLITILAMIIKGYLDFSGNTAGKGNEALYHSNFSSFAEGFTQGYLTMDAIAAIAFSMIVVNAVKLTGITKTNQIFKQTLTAGLIAAVALIFIYISLGYIGNHMPVSDMTLDQLKSKDRNIGTYLLTTMASTGFGSFGKYLLGIIVALACLTTACGLIGAVSEYFHRIVPKVSYKAFVLVFILMSFIIANQGLNAVISMSIPVLSIVYPVAITVVLLILIAKFIPTKRISQQIPVIIVFILSIFSVISKLGWLKINFIESLPLRAYSLEWFPVAIIATILGYLVGIFVKQDPIKYQQE</sequence>
<feature type="chain" id="PRO_0000294011" description="Putative branched-chain amino acid carrier protein SAB1263c">
    <location>
        <begin position="1"/>
        <end position="447"/>
    </location>
</feature>
<feature type="transmembrane region" description="Helical" evidence="2">
    <location>
        <begin position="6"/>
        <end position="26"/>
    </location>
</feature>
<feature type="transmembrane region" description="Helical" evidence="2">
    <location>
        <begin position="40"/>
        <end position="60"/>
    </location>
</feature>
<feature type="transmembrane region" description="Helical" evidence="2">
    <location>
        <begin position="74"/>
        <end position="94"/>
    </location>
</feature>
<feature type="transmembrane region" description="Helical" evidence="2">
    <location>
        <begin position="114"/>
        <end position="134"/>
    </location>
</feature>
<feature type="transmembrane region" description="Helical" evidence="2">
    <location>
        <begin position="143"/>
        <end position="163"/>
    </location>
</feature>
<feature type="transmembrane region" description="Helical" evidence="2">
    <location>
        <begin position="193"/>
        <end position="213"/>
    </location>
</feature>
<feature type="transmembrane region" description="Helical" evidence="2">
    <location>
        <begin position="229"/>
        <end position="249"/>
    </location>
</feature>
<feature type="transmembrane region" description="Helical" evidence="2">
    <location>
        <begin position="290"/>
        <end position="310"/>
    </location>
</feature>
<feature type="transmembrane region" description="Helical" evidence="2">
    <location>
        <begin position="326"/>
        <end position="346"/>
    </location>
</feature>
<feature type="transmembrane region" description="Helical" evidence="2">
    <location>
        <begin position="350"/>
        <end position="370"/>
    </location>
</feature>
<feature type="transmembrane region" description="Helical" evidence="2">
    <location>
        <begin position="382"/>
        <end position="402"/>
    </location>
</feature>
<feature type="transmembrane region" description="Helical" evidence="2">
    <location>
        <begin position="417"/>
        <end position="437"/>
    </location>
</feature>
<keyword id="KW-0029">Amino-acid transport</keyword>
<keyword id="KW-1003">Cell membrane</keyword>
<keyword id="KW-0472">Membrane</keyword>
<keyword id="KW-0812">Transmembrane</keyword>
<keyword id="KW-1133">Transmembrane helix</keyword>
<keyword id="KW-0813">Transport</keyword>
<accession>Q2YY11</accession>
<name>BRNQL_STAAB</name>
<dbReference type="EMBL" id="AJ938182">
    <property type="protein sequence ID" value="CAI80952.1"/>
    <property type="molecule type" value="Genomic_DNA"/>
</dbReference>
<dbReference type="RefSeq" id="WP_001039263.1">
    <property type="nucleotide sequence ID" value="NC_007622.1"/>
</dbReference>
<dbReference type="KEGG" id="sab:SAB1263c"/>
<dbReference type="HOGENOM" id="CLU_036807_0_1_9"/>
<dbReference type="GO" id="GO:0005886">
    <property type="term" value="C:plasma membrane"/>
    <property type="evidence" value="ECO:0007669"/>
    <property type="project" value="UniProtKB-SubCell"/>
</dbReference>
<dbReference type="GO" id="GO:0015188">
    <property type="term" value="F:L-isoleucine transmembrane transporter activity"/>
    <property type="evidence" value="ECO:0007669"/>
    <property type="project" value="TreeGrafter"/>
</dbReference>
<dbReference type="GO" id="GO:0015190">
    <property type="term" value="F:L-leucine transmembrane transporter activity"/>
    <property type="evidence" value="ECO:0007669"/>
    <property type="project" value="TreeGrafter"/>
</dbReference>
<dbReference type="GO" id="GO:0005304">
    <property type="term" value="F:L-valine transmembrane transporter activity"/>
    <property type="evidence" value="ECO:0007669"/>
    <property type="project" value="TreeGrafter"/>
</dbReference>
<dbReference type="GO" id="GO:0015818">
    <property type="term" value="P:isoleucine transport"/>
    <property type="evidence" value="ECO:0007669"/>
    <property type="project" value="TreeGrafter"/>
</dbReference>
<dbReference type="GO" id="GO:0015820">
    <property type="term" value="P:L-leucine transport"/>
    <property type="evidence" value="ECO:0007669"/>
    <property type="project" value="TreeGrafter"/>
</dbReference>
<dbReference type="FunFam" id="1.20.1740.10:FF:000068">
    <property type="entry name" value="Branched-chain amino acid transport system carrier protein"/>
    <property type="match status" value="1"/>
</dbReference>
<dbReference type="Gene3D" id="1.20.1740.10">
    <property type="entry name" value="Amino acid/polyamine transporter I"/>
    <property type="match status" value="1"/>
</dbReference>
<dbReference type="InterPro" id="IPR004685">
    <property type="entry name" value="Brnchd-chn_aa_trnsp_Livcs"/>
</dbReference>
<dbReference type="NCBIfam" id="TIGR00796">
    <property type="entry name" value="livcs"/>
    <property type="match status" value="1"/>
</dbReference>
<dbReference type="PANTHER" id="PTHR30588:SF7">
    <property type="entry name" value="BRANCHED-CHAIN AMINO ACID CARRIER PROTEIN SAOUHSC_01411-RELATED"/>
    <property type="match status" value="1"/>
</dbReference>
<dbReference type="PANTHER" id="PTHR30588">
    <property type="entry name" value="BRANCHED-CHAIN AMINO ACID TRANSPORT SYSTEM 2 CARRIER PROTEIN"/>
    <property type="match status" value="1"/>
</dbReference>
<dbReference type="Pfam" id="PF05525">
    <property type="entry name" value="Branch_AA_trans"/>
    <property type="match status" value="1"/>
</dbReference>
<comment type="function">
    <text evidence="1 3">Component of the transport system for branched-chain amino acids (leucine, isoleucine and valine), which is coupled to a proton motive force (Potential). Contributes to NaCl tolerance (By similarity).</text>
</comment>
<comment type="subcellular location">
    <subcellularLocation>
        <location evidence="3">Cell membrane</location>
        <topology evidence="3">Multi-pass membrane protein</topology>
    </subcellularLocation>
</comment>
<comment type="similarity">
    <text evidence="3">Belongs to the branched chain amino acid transporter family.</text>
</comment>
<protein>
    <recommendedName>
        <fullName>Putative branched-chain amino acid carrier protein SAB1263c</fullName>
    </recommendedName>
</protein>
<reference key="1">
    <citation type="journal article" date="2007" name="PLoS ONE">
        <title>Molecular correlates of host specialization in Staphylococcus aureus.</title>
        <authorList>
            <person name="Herron-Olson L."/>
            <person name="Fitzgerald J.R."/>
            <person name="Musser J.M."/>
            <person name="Kapur V."/>
        </authorList>
    </citation>
    <scope>NUCLEOTIDE SEQUENCE [LARGE SCALE GENOMIC DNA]</scope>
    <source>
        <strain>bovine RF122 / ET3-1</strain>
    </source>
</reference>
<evidence type="ECO:0000250" key="1"/>
<evidence type="ECO:0000255" key="2"/>
<evidence type="ECO:0000305" key="3"/>
<proteinExistence type="inferred from homology"/>